<accession>P45114</accession>
<comment type="function">
    <text>Probable receptor, TonB-dependent.</text>
</comment>
<comment type="subcellular location">
    <subcellularLocation>
        <location evidence="2 3">Cell outer membrane</location>
        <topology evidence="2">Multi-pass membrane protein</topology>
    </subcellularLocation>
</comment>
<comment type="similarity">
    <text evidence="3">Belongs to the TonB-dependent receptor family.</text>
</comment>
<keyword id="KW-0998">Cell outer membrane</keyword>
<keyword id="KW-0472">Membrane</keyword>
<keyword id="KW-0675">Receptor</keyword>
<keyword id="KW-1185">Reference proteome</keyword>
<keyword id="KW-0732">Signal</keyword>
<keyword id="KW-0798">TonB box</keyword>
<keyword id="KW-0812">Transmembrane</keyword>
<keyword id="KW-1134">Transmembrane beta strand</keyword>
<keyword id="KW-0813">Transport</keyword>
<proteinExistence type="evidence at protein level"/>
<evidence type="ECO:0000255" key="1"/>
<evidence type="ECO:0000255" key="2">
    <source>
        <dbReference type="PROSITE-ProRule" id="PRU01360"/>
    </source>
</evidence>
<evidence type="ECO:0000305" key="3"/>
<name>Y1217_HAEIN</name>
<reference key="1">
    <citation type="journal article" date="1995" name="Science">
        <title>Whole-genome random sequencing and assembly of Haemophilus influenzae Rd.</title>
        <authorList>
            <person name="Fleischmann R.D."/>
            <person name="Adams M.D."/>
            <person name="White O."/>
            <person name="Clayton R.A."/>
            <person name="Kirkness E.F."/>
            <person name="Kerlavage A.R."/>
            <person name="Bult C.J."/>
            <person name="Tomb J.-F."/>
            <person name="Dougherty B.A."/>
            <person name="Merrick J.M."/>
            <person name="McKenney K."/>
            <person name="Sutton G.G."/>
            <person name="FitzHugh W."/>
            <person name="Fields C.A."/>
            <person name="Gocayne J.D."/>
            <person name="Scott J.D."/>
            <person name="Shirley R."/>
            <person name="Liu L.-I."/>
            <person name="Glodek A."/>
            <person name="Kelley J.M."/>
            <person name="Weidman J.F."/>
            <person name="Phillips C.A."/>
            <person name="Spriggs T."/>
            <person name="Hedblom E."/>
            <person name="Cotton M.D."/>
            <person name="Utterback T.R."/>
            <person name="Hanna M.C."/>
            <person name="Nguyen D.T."/>
            <person name="Saudek D.M."/>
            <person name="Brandon R.C."/>
            <person name="Fine L.D."/>
            <person name="Fritchman J.L."/>
            <person name="Fuhrmann J.L."/>
            <person name="Geoghagen N.S.M."/>
            <person name="Gnehm C.L."/>
            <person name="McDonald L.A."/>
            <person name="Small K.V."/>
            <person name="Fraser C.M."/>
            <person name="Smith H.O."/>
            <person name="Venter J.C."/>
        </authorList>
    </citation>
    <scope>NUCLEOTIDE SEQUENCE [LARGE SCALE GENOMIC DNA]</scope>
    <source>
        <strain>ATCC 51907 / DSM 11121 / KW20 / Rd</strain>
    </source>
</reference>
<reference key="2">
    <citation type="journal article" date="2000" name="Electrophoresis">
        <title>Two-dimensional map of the proteome of Haemophilus influenzae.</title>
        <authorList>
            <person name="Langen H."/>
            <person name="Takacs B."/>
            <person name="Evers S."/>
            <person name="Berndt P."/>
            <person name="Lahm H.W."/>
            <person name="Wipf B."/>
            <person name="Gray C."/>
            <person name="Fountoulakis M."/>
        </authorList>
    </citation>
    <scope>IDENTIFICATION BY MASS SPECTROMETRY</scope>
    <source>
        <strain>ATCC 51907 / DSM 11121 / KW20 / Rd</strain>
    </source>
</reference>
<protein>
    <recommendedName>
        <fullName>Probable TonB-dependent receptor HI_1217</fullName>
    </recommendedName>
</protein>
<sequence>MKKAIKLNLITLGLINTIGMTITQAQAEETLGQIDVVEKVISNDKKPFTEAKAKSTRENVFKETQTIDQVIRSIPGAFTQQDKGSGVVSVNIRGENGLGRVNTMVDGVTQTFYSTALDSGQSGGSSQFGAAIDPNFIAGVDVNKSNFSGASGINALAGSANFRTLGVNDVITDDKPFGIILKGMTGSNATKSNFMTMAAGRKWLDNGGYVGVVYGYSQREVSQDYRIGGGERLASLGQDILAKEKEAYFRNAGYILNPEGQWTPDLSKKHWSCNKPDYQKNGDCSYYRIGSAAKTRREILQELLTNGKKPKDIEKLQKGNDGIEETDKSFERNKDQYSVAPIEPGSLQSRSRSHLLKFEYGDDHQNLGAQLRTLDNKIGSRKIENRNYQVNYNFNNNSYLDLNLMAAHNIGKTIYPKGGFFAGWQVADKLITKNVANIVDINNSHTFLLPKEIDLKTTLGFNYFTNEYSKNRFPEELSLFYNDASHDQGLYSHSKRGRYSGTKSLLPQRSVILQPSGKQKFKTVYFDTALSKGIYHLNYSVNFTHYAFNGEYVGYENTAGQQINEPILHKSGHKKAFNHSATLSAELSDYFMPFFTYSRTHRMPNIQEMFFSQVSNAGVNTALKPEQSDTYQLGFNTYKKGLFTQDDVLGVKLVGYRSFIKNYIHNVYGVWWRDGMPTWAESNGFKYTIAHQNYKPIVKKSGVELEINYDMGRFFANVSYAYQRTNQPTNYADASPRPNNASQEDILKQGYGLSRVSMLPKDYGRLELGTRWFDQKLTLGLAARYYGKSKRATIEEEYINGSRFKKNTLRRENYYAVKKTEDIKKQPIILDLHVSYEPIKDLIIKAEVQNLLDKRYVDPLDAGNDAASQRYYSSLNNSIECAQDSSACGGSDKTVLYNFARGRTYILSLNYKF</sequence>
<gene>
    <name type="ordered locus">HI_1217</name>
</gene>
<organism>
    <name type="scientific">Haemophilus influenzae (strain ATCC 51907 / DSM 11121 / KW20 / Rd)</name>
    <dbReference type="NCBI Taxonomy" id="71421"/>
    <lineage>
        <taxon>Bacteria</taxon>
        <taxon>Pseudomonadati</taxon>
        <taxon>Pseudomonadota</taxon>
        <taxon>Gammaproteobacteria</taxon>
        <taxon>Pasteurellales</taxon>
        <taxon>Pasteurellaceae</taxon>
        <taxon>Haemophilus</taxon>
    </lineage>
</organism>
<dbReference type="EMBL" id="L42023">
    <property type="protein sequence ID" value="AAC22870.1"/>
    <property type="molecule type" value="Genomic_DNA"/>
</dbReference>
<dbReference type="PIR" id="G64110">
    <property type="entry name" value="G64110"/>
</dbReference>
<dbReference type="RefSeq" id="NP_439373.1">
    <property type="nucleotide sequence ID" value="NC_000907.1"/>
</dbReference>
<dbReference type="STRING" id="71421.HI_1217"/>
<dbReference type="TCDB" id="1.B.14.7.3">
    <property type="family name" value="the outer membrane receptor (omr) family"/>
</dbReference>
<dbReference type="EnsemblBacteria" id="AAC22870">
    <property type="protein sequence ID" value="AAC22870"/>
    <property type="gene ID" value="HI_1217"/>
</dbReference>
<dbReference type="KEGG" id="hin:HI_1217"/>
<dbReference type="PATRIC" id="fig|71421.8.peg.1269"/>
<dbReference type="eggNOG" id="COG1629">
    <property type="taxonomic scope" value="Bacteria"/>
</dbReference>
<dbReference type="eggNOG" id="COG4206">
    <property type="taxonomic scope" value="Bacteria"/>
</dbReference>
<dbReference type="HOGENOM" id="CLU_008287_19_1_6"/>
<dbReference type="OrthoDB" id="6046653at2"/>
<dbReference type="PhylomeDB" id="P45114"/>
<dbReference type="BioCyc" id="HINF71421:G1GJ1-1248-MONOMER"/>
<dbReference type="Proteomes" id="UP000000579">
    <property type="component" value="Chromosome"/>
</dbReference>
<dbReference type="GO" id="GO:0009279">
    <property type="term" value="C:cell outer membrane"/>
    <property type="evidence" value="ECO:0000318"/>
    <property type="project" value="GO_Central"/>
</dbReference>
<dbReference type="GO" id="GO:0015344">
    <property type="term" value="F:siderophore uptake transmembrane transporter activity"/>
    <property type="evidence" value="ECO:0000318"/>
    <property type="project" value="GO_Central"/>
</dbReference>
<dbReference type="GO" id="GO:0044718">
    <property type="term" value="P:siderophore transmembrane transport"/>
    <property type="evidence" value="ECO:0000318"/>
    <property type="project" value="GO_Central"/>
</dbReference>
<dbReference type="Gene3D" id="2.40.170.20">
    <property type="entry name" value="TonB-dependent receptor, beta-barrel domain"/>
    <property type="match status" value="1"/>
</dbReference>
<dbReference type="Gene3D" id="2.170.130.10">
    <property type="entry name" value="TonB-dependent receptor, plug domain"/>
    <property type="match status" value="1"/>
</dbReference>
<dbReference type="InterPro" id="IPR012910">
    <property type="entry name" value="Plug_dom"/>
</dbReference>
<dbReference type="InterPro" id="IPR037066">
    <property type="entry name" value="Plug_dom_sf"/>
</dbReference>
<dbReference type="InterPro" id="IPR039426">
    <property type="entry name" value="TonB-dep_rcpt-like"/>
</dbReference>
<dbReference type="InterPro" id="IPR000531">
    <property type="entry name" value="TonB-dep_rcpt_b-brl"/>
</dbReference>
<dbReference type="InterPro" id="IPR036942">
    <property type="entry name" value="TonB_rcpt_b-brl_sf"/>
</dbReference>
<dbReference type="PANTHER" id="PTHR30069">
    <property type="entry name" value="TONB-DEPENDENT OUTER MEMBRANE RECEPTOR"/>
    <property type="match status" value="1"/>
</dbReference>
<dbReference type="PANTHER" id="PTHR30069:SF50">
    <property type="entry name" value="TONB-DEPENDENT RECEPTOR HI_1217-RELATED"/>
    <property type="match status" value="1"/>
</dbReference>
<dbReference type="Pfam" id="PF07715">
    <property type="entry name" value="Plug"/>
    <property type="match status" value="1"/>
</dbReference>
<dbReference type="Pfam" id="PF00593">
    <property type="entry name" value="TonB_dep_Rec_b-barrel"/>
    <property type="match status" value="1"/>
</dbReference>
<dbReference type="SUPFAM" id="SSF56935">
    <property type="entry name" value="Porins"/>
    <property type="match status" value="1"/>
</dbReference>
<dbReference type="PROSITE" id="PS01156">
    <property type="entry name" value="TONB_DEPENDENT_REC_2"/>
    <property type="match status" value="1"/>
</dbReference>
<dbReference type="PROSITE" id="PS52016">
    <property type="entry name" value="TONB_DEPENDENT_REC_3"/>
    <property type="match status" value="1"/>
</dbReference>
<feature type="signal peptide" evidence="1">
    <location>
        <begin position="1"/>
        <end position="27"/>
    </location>
</feature>
<feature type="chain" id="PRO_0000034793" description="Probable TonB-dependent receptor HI_1217">
    <location>
        <begin position="28"/>
        <end position="913"/>
    </location>
</feature>
<feature type="domain" description="TBDR plug" evidence="2">
    <location>
        <begin position="42"/>
        <end position="165"/>
    </location>
</feature>
<feature type="domain" description="TBDR beta-barrel" evidence="2">
    <location>
        <begin position="176"/>
        <end position="913"/>
    </location>
</feature>
<feature type="short sequence motif" description="TonB C-terminal box">
    <location>
        <begin position="896"/>
        <end position="913"/>
    </location>
</feature>